<proteinExistence type="inferred from homology"/>
<accession>B1J9G3</accession>
<keyword id="KW-0963">Cytoplasm</keyword>
<keyword id="KW-0597">Phosphoprotein</keyword>
<comment type="function">
    <text evidence="1">Subunit of malonate decarboxylase, it is an acyl carrier protein to which acetyl and malonyl thioester residues are bound via a 2'-(5''-phosphoribosyl)-3'-dephospho-CoA prosthetic group and turn over during the catalytic mechanism.</text>
</comment>
<comment type="subcellular location">
    <subcellularLocation>
        <location evidence="1">Cytoplasm</location>
    </subcellularLocation>
</comment>
<comment type="PTM">
    <text evidence="1">Covalently binds the prosthetic group of malonate decarboxylase.</text>
</comment>
<comment type="similarity">
    <text evidence="1">Belongs to the MdcC family.</text>
</comment>
<reference key="1">
    <citation type="submission" date="2008-02" db="EMBL/GenBank/DDBJ databases">
        <title>Complete sequence of Pseudomonas putida W619.</title>
        <authorList>
            <person name="Copeland A."/>
            <person name="Lucas S."/>
            <person name="Lapidus A."/>
            <person name="Barry K."/>
            <person name="Detter J.C."/>
            <person name="Glavina del Rio T."/>
            <person name="Dalin E."/>
            <person name="Tice H."/>
            <person name="Pitluck S."/>
            <person name="Chain P."/>
            <person name="Malfatti S."/>
            <person name="Shin M."/>
            <person name="Vergez L."/>
            <person name="Schmutz J."/>
            <person name="Larimer F."/>
            <person name="Land M."/>
            <person name="Hauser L."/>
            <person name="Kyrpides N."/>
            <person name="Kim E."/>
            <person name="Taghavi S."/>
            <person name="Vangronsveld D."/>
            <person name="van der Lelie D."/>
            <person name="Richardson P."/>
        </authorList>
    </citation>
    <scope>NUCLEOTIDE SEQUENCE [LARGE SCALE GENOMIC DNA]</scope>
    <source>
        <strain>W619</strain>
    </source>
</reference>
<sequence>METLTFQFPAAEPGRGRTLVGCVSSGDLEVLMEPGTAGSLNIQVVTSVNGSGARWEQLFQRLFQGRTWPAVNIDIHDFGATPGVVRLRLEQGFEEIAHD</sequence>
<evidence type="ECO:0000255" key="1">
    <source>
        <dbReference type="HAMAP-Rule" id="MF_00710"/>
    </source>
</evidence>
<gene>
    <name evidence="1" type="primary">mdcC</name>
    <name type="ordered locus">PputW619_2881</name>
</gene>
<dbReference type="EMBL" id="CP000949">
    <property type="protein sequence ID" value="ACA73373.1"/>
    <property type="molecule type" value="Genomic_DNA"/>
</dbReference>
<dbReference type="SMR" id="B1J9G3"/>
<dbReference type="STRING" id="390235.PputW619_2881"/>
<dbReference type="KEGG" id="ppw:PputW619_2881"/>
<dbReference type="eggNOG" id="COG3052">
    <property type="taxonomic scope" value="Bacteria"/>
</dbReference>
<dbReference type="HOGENOM" id="CLU_173135_1_0_6"/>
<dbReference type="OrthoDB" id="120290at2"/>
<dbReference type="GO" id="GO:0005737">
    <property type="term" value="C:cytoplasm"/>
    <property type="evidence" value="ECO:0007669"/>
    <property type="project" value="UniProtKB-SubCell"/>
</dbReference>
<dbReference type="GO" id="GO:0000036">
    <property type="term" value="F:acyl carrier activity"/>
    <property type="evidence" value="ECO:0007669"/>
    <property type="project" value="UniProtKB-UniRule"/>
</dbReference>
<dbReference type="HAMAP" id="MF_00710">
    <property type="entry name" value="Malonate_deCO2ase_dsu"/>
    <property type="match status" value="1"/>
</dbReference>
<dbReference type="InterPro" id="IPR023439">
    <property type="entry name" value="Mal_deCO2ase/Cit_lyase_ACP"/>
</dbReference>
<dbReference type="InterPro" id="IPR009662">
    <property type="entry name" value="Malonate_deCO2ase_dsu"/>
</dbReference>
<dbReference type="NCBIfam" id="TIGR03130">
    <property type="entry name" value="malonate_delta"/>
    <property type="match status" value="1"/>
</dbReference>
<dbReference type="NCBIfam" id="NF002293">
    <property type="entry name" value="PRK01220.1"/>
    <property type="match status" value="1"/>
</dbReference>
<dbReference type="Pfam" id="PF06857">
    <property type="entry name" value="ACP"/>
    <property type="match status" value="1"/>
</dbReference>
<organism>
    <name type="scientific">Pseudomonas putida (strain W619)</name>
    <dbReference type="NCBI Taxonomy" id="390235"/>
    <lineage>
        <taxon>Bacteria</taxon>
        <taxon>Pseudomonadati</taxon>
        <taxon>Pseudomonadota</taxon>
        <taxon>Gammaproteobacteria</taxon>
        <taxon>Pseudomonadales</taxon>
        <taxon>Pseudomonadaceae</taxon>
        <taxon>Pseudomonas</taxon>
    </lineage>
</organism>
<protein>
    <recommendedName>
        <fullName evidence="1">Malonate decarboxylase acyl carrier protein</fullName>
    </recommendedName>
    <alternativeName>
        <fullName evidence="1">Malonate decarboxylase subunit delta</fullName>
    </alternativeName>
</protein>
<feature type="chain" id="PRO_1000191174" description="Malonate decarboxylase acyl carrier protein">
    <location>
        <begin position="1"/>
        <end position="99"/>
    </location>
</feature>
<feature type="modified residue" description="O-(phosphoribosyl dephospho-coenzyme A)serine" evidence="1">
    <location>
        <position position="25"/>
    </location>
</feature>
<name>MDCC_PSEPW</name>